<evidence type="ECO:0000255" key="1">
    <source>
        <dbReference type="HAMAP-Rule" id="MF_00087"/>
    </source>
</evidence>
<feature type="chain" id="PRO_0000335014" description="Glutamyl-tRNA reductase">
    <location>
        <begin position="1"/>
        <end position="434"/>
    </location>
</feature>
<feature type="active site" description="Nucleophile" evidence="1">
    <location>
        <position position="58"/>
    </location>
</feature>
<feature type="binding site" evidence="1">
    <location>
        <begin position="57"/>
        <end position="60"/>
    </location>
    <ligand>
        <name>substrate</name>
    </ligand>
</feature>
<feature type="binding site" evidence="1">
    <location>
        <position position="116"/>
    </location>
    <ligand>
        <name>substrate</name>
    </ligand>
</feature>
<feature type="binding site" evidence="1">
    <location>
        <begin position="121"/>
        <end position="123"/>
    </location>
    <ligand>
        <name>substrate</name>
    </ligand>
</feature>
<feature type="binding site" evidence="1">
    <location>
        <position position="127"/>
    </location>
    <ligand>
        <name>substrate</name>
    </ligand>
</feature>
<feature type="binding site" evidence="1">
    <location>
        <begin position="196"/>
        <end position="201"/>
    </location>
    <ligand>
        <name>NADP(+)</name>
        <dbReference type="ChEBI" id="CHEBI:58349"/>
    </ligand>
</feature>
<feature type="site" description="Important for activity" evidence="1">
    <location>
        <position position="106"/>
    </location>
</feature>
<name>HEM1_BURM7</name>
<dbReference type="EC" id="1.2.1.70" evidence="1"/>
<dbReference type="EMBL" id="CP000547">
    <property type="protein sequence ID" value="ABO03720.1"/>
    <property type="molecule type" value="Genomic_DNA"/>
</dbReference>
<dbReference type="SMR" id="A3MFT3"/>
<dbReference type="KEGG" id="bmn:BMA10247_A1942"/>
<dbReference type="UniPathway" id="UPA00251">
    <property type="reaction ID" value="UER00316"/>
</dbReference>
<dbReference type="GO" id="GO:0008883">
    <property type="term" value="F:glutamyl-tRNA reductase activity"/>
    <property type="evidence" value="ECO:0007669"/>
    <property type="project" value="UniProtKB-UniRule"/>
</dbReference>
<dbReference type="GO" id="GO:0050661">
    <property type="term" value="F:NADP binding"/>
    <property type="evidence" value="ECO:0007669"/>
    <property type="project" value="InterPro"/>
</dbReference>
<dbReference type="GO" id="GO:0019353">
    <property type="term" value="P:protoporphyrinogen IX biosynthetic process from glutamate"/>
    <property type="evidence" value="ECO:0007669"/>
    <property type="project" value="TreeGrafter"/>
</dbReference>
<dbReference type="CDD" id="cd05213">
    <property type="entry name" value="NAD_bind_Glutamyl_tRNA_reduct"/>
    <property type="match status" value="1"/>
</dbReference>
<dbReference type="FunFam" id="3.30.460.30:FF:000001">
    <property type="entry name" value="Glutamyl-tRNA reductase"/>
    <property type="match status" value="1"/>
</dbReference>
<dbReference type="FunFam" id="3.40.50.720:FF:000031">
    <property type="entry name" value="Glutamyl-tRNA reductase"/>
    <property type="match status" value="1"/>
</dbReference>
<dbReference type="Gene3D" id="3.30.460.30">
    <property type="entry name" value="Glutamyl-tRNA reductase, N-terminal domain"/>
    <property type="match status" value="1"/>
</dbReference>
<dbReference type="Gene3D" id="3.40.50.720">
    <property type="entry name" value="NAD(P)-binding Rossmann-like Domain"/>
    <property type="match status" value="1"/>
</dbReference>
<dbReference type="HAMAP" id="MF_00087">
    <property type="entry name" value="Glu_tRNA_reductase"/>
    <property type="match status" value="1"/>
</dbReference>
<dbReference type="InterPro" id="IPR000343">
    <property type="entry name" value="4pyrrol_synth_GluRdtase"/>
</dbReference>
<dbReference type="InterPro" id="IPR015896">
    <property type="entry name" value="4pyrrol_synth_GluRdtase_dimer"/>
</dbReference>
<dbReference type="InterPro" id="IPR015895">
    <property type="entry name" value="4pyrrol_synth_GluRdtase_N"/>
</dbReference>
<dbReference type="InterPro" id="IPR018214">
    <property type="entry name" value="GluRdtase_CS"/>
</dbReference>
<dbReference type="InterPro" id="IPR036453">
    <property type="entry name" value="GluRdtase_dimer_dom_sf"/>
</dbReference>
<dbReference type="InterPro" id="IPR036343">
    <property type="entry name" value="GluRdtase_N_sf"/>
</dbReference>
<dbReference type="InterPro" id="IPR036291">
    <property type="entry name" value="NAD(P)-bd_dom_sf"/>
</dbReference>
<dbReference type="InterPro" id="IPR006151">
    <property type="entry name" value="Shikm_DH/Glu-tRNA_Rdtase"/>
</dbReference>
<dbReference type="NCBIfam" id="TIGR01035">
    <property type="entry name" value="hemA"/>
    <property type="match status" value="1"/>
</dbReference>
<dbReference type="PANTHER" id="PTHR43013">
    <property type="entry name" value="GLUTAMYL-TRNA REDUCTASE"/>
    <property type="match status" value="1"/>
</dbReference>
<dbReference type="PANTHER" id="PTHR43013:SF1">
    <property type="entry name" value="GLUTAMYL-TRNA REDUCTASE"/>
    <property type="match status" value="1"/>
</dbReference>
<dbReference type="Pfam" id="PF00745">
    <property type="entry name" value="GlutR_dimer"/>
    <property type="match status" value="1"/>
</dbReference>
<dbReference type="Pfam" id="PF05201">
    <property type="entry name" value="GlutR_N"/>
    <property type="match status" value="1"/>
</dbReference>
<dbReference type="Pfam" id="PF01488">
    <property type="entry name" value="Shikimate_DH"/>
    <property type="match status" value="1"/>
</dbReference>
<dbReference type="PIRSF" id="PIRSF000445">
    <property type="entry name" value="4pyrrol_synth_GluRdtase"/>
    <property type="match status" value="1"/>
</dbReference>
<dbReference type="SUPFAM" id="SSF69742">
    <property type="entry name" value="Glutamyl tRNA-reductase catalytic, N-terminal domain"/>
    <property type="match status" value="1"/>
</dbReference>
<dbReference type="SUPFAM" id="SSF69075">
    <property type="entry name" value="Glutamyl tRNA-reductase dimerization domain"/>
    <property type="match status" value="1"/>
</dbReference>
<dbReference type="SUPFAM" id="SSF51735">
    <property type="entry name" value="NAD(P)-binding Rossmann-fold domains"/>
    <property type="match status" value="1"/>
</dbReference>
<dbReference type="PROSITE" id="PS00747">
    <property type="entry name" value="GLUTR"/>
    <property type="match status" value="1"/>
</dbReference>
<reference key="1">
    <citation type="journal article" date="2010" name="Genome Biol. Evol.">
        <title>Continuing evolution of Burkholderia mallei through genome reduction and large-scale rearrangements.</title>
        <authorList>
            <person name="Losada L."/>
            <person name="Ronning C.M."/>
            <person name="DeShazer D."/>
            <person name="Woods D."/>
            <person name="Fedorova N."/>
            <person name="Kim H.S."/>
            <person name="Shabalina S.A."/>
            <person name="Pearson T.R."/>
            <person name="Brinkac L."/>
            <person name="Tan P."/>
            <person name="Nandi T."/>
            <person name="Crabtree J."/>
            <person name="Badger J."/>
            <person name="Beckstrom-Sternberg S."/>
            <person name="Saqib M."/>
            <person name="Schutzer S.E."/>
            <person name="Keim P."/>
            <person name="Nierman W.C."/>
        </authorList>
    </citation>
    <scope>NUCLEOTIDE SEQUENCE [LARGE SCALE GENOMIC DNA]</scope>
    <source>
        <strain>NCTC 10247</strain>
    </source>
</reference>
<protein>
    <recommendedName>
        <fullName evidence="1">Glutamyl-tRNA reductase</fullName>
        <shortName evidence="1">GluTR</shortName>
        <ecNumber evidence="1">1.2.1.70</ecNumber>
    </recommendedName>
</protein>
<accession>A3MFT3</accession>
<proteinExistence type="inferred from homology"/>
<keyword id="KW-0521">NADP</keyword>
<keyword id="KW-0560">Oxidoreductase</keyword>
<keyword id="KW-0627">Porphyrin biosynthesis</keyword>
<gene>
    <name evidence="1" type="primary">hemA</name>
    <name type="ordered locus">BMA10247_A1942</name>
</gene>
<sequence length="434" mass="47546">MDMQLLTIGINHHTAPVALRERVAFPLEQIKPALSTFKSVFLGHPAPNAPEAAILSTCNRTELYCATNDRAARDAAIRWMSDYHRIPADELAPHVYALPQSEAVRHAFRVASGLDSMVLGETQILGQMKNAVRTASEAGSLGTYLNQLFQRTFAVAKEVRGTTEIGAQSVSMAAAAVRLAQRIFEQVAQQRVLFIGAGEMIELCATHFAAQGPRELVVANRTAERGAKLAERFGGRAMPLADLPARMHEFDIIVSCTASTLPIIGLGAVERAVKARRHRPIFMVDLAVPRDIEPEVGKLKDVFLYTVDDLGAIVREGNASRQAAVAQAEAIIETRVQNFMQWLDARSIVPVIRHMHTQADALRRAEVERARKMLARGDDPDAVLDALSQALTNKLIHGPTSALNRANGADRDSLIDLMRGFYQHAPRSSDTSDR</sequence>
<comment type="function">
    <text evidence="1">Catalyzes the NADPH-dependent reduction of glutamyl-tRNA(Glu) to glutamate 1-semialdehyde (GSA).</text>
</comment>
<comment type="catalytic activity">
    <reaction evidence="1">
        <text>(S)-4-amino-5-oxopentanoate + tRNA(Glu) + NADP(+) = L-glutamyl-tRNA(Glu) + NADPH + H(+)</text>
        <dbReference type="Rhea" id="RHEA:12344"/>
        <dbReference type="Rhea" id="RHEA-COMP:9663"/>
        <dbReference type="Rhea" id="RHEA-COMP:9680"/>
        <dbReference type="ChEBI" id="CHEBI:15378"/>
        <dbReference type="ChEBI" id="CHEBI:57501"/>
        <dbReference type="ChEBI" id="CHEBI:57783"/>
        <dbReference type="ChEBI" id="CHEBI:58349"/>
        <dbReference type="ChEBI" id="CHEBI:78442"/>
        <dbReference type="ChEBI" id="CHEBI:78520"/>
        <dbReference type="EC" id="1.2.1.70"/>
    </reaction>
</comment>
<comment type="pathway">
    <text evidence="1">Porphyrin-containing compound metabolism; protoporphyrin-IX biosynthesis; 5-aminolevulinate from L-glutamyl-tRNA(Glu): step 1/2.</text>
</comment>
<comment type="subunit">
    <text evidence="1">Homodimer.</text>
</comment>
<comment type="domain">
    <text evidence="1">Possesses an unusual extended V-shaped dimeric structure with each monomer consisting of three distinct domains arranged along a curved 'spinal' alpha-helix. The N-terminal catalytic domain specifically recognizes the glutamate moiety of the substrate. The second domain is the NADPH-binding domain, and the third C-terminal domain is responsible for dimerization.</text>
</comment>
<comment type="miscellaneous">
    <text evidence="1">During catalysis, the active site Cys acts as a nucleophile attacking the alpha-carbonyl group of tRNA-bound glutamate with the formation of a thioester intermediate between enzyme and glutamate, and the concomitant release of tRNA(Glu). The thioester intermediate is finally reduced by direct hydride transfer from NADPH, to form the product GSA.</text>
</comment>
<comment type="similarity">
    <text evidence="1">Belongs to the glutamyl-tRNA reductase family.</text>
</comment>
<organism>
    <name type="scientific">Burkholderia mallei (strain NCTC 10247)</name>
    <dbReference type="NCBI Taxonomy" id="320389"/>
    <lineage>
        <taxon>Bacteria</taxon>
        <taxon>Pseudomonadati</taxon>
        <taxon>Pseudomonadota</taxon>
        <taxon>Betaproteobacteria</taxon>
        <taxon>Burkholderiales</taxon>
        <taxon>Burkholderiaceae</taxon>
        <taxon>Burkholderia</taxon>
        <taxon>pseudomallei group</taxon>
    </lineage>
</organism>